<reference key="1">
    <citation type="submission" date="2006-12" db="EMBL/GenBank/DDBJ databases">
        <authorList>
            <person name="Fouts D.E."/>
            <person name="Nelson K.E."/>
            <person name="Sebastian Y."/>
        </authorList>
    </citation>
    <scope>NUCLEOTIDE SEQUENCE [LARGE SCALE GENOMIC DNA]</scope>
    <source>
        <strain>81-176</strain>
    </source>
</reference>
<sequence length="373" mass="42480">MEFKLKHKDGMARVCEITTAHSTFLTPVFMPVGTVGAVKSLDANDMKNELDAKIILANTYHMYLRPTSKVVKDFGGLHGFTKFDRSFLTDSGGFQAFSLSKNSKHFNEGIEFKSHIDGSHHLFTPKSVLDTQYDFNSDIMMILDDLVALPATKERVKISVDRTILWAKEAITYHKSMQNKGIGIGQNIFGIIQGGTDYEERKRCALSLNEMPFDGLAIGGLSVGEENALMYETVQNLNPYLDENRPRYLMGVGTPEDLVENVERGVDMFDCVMPTRNARNGTFFTSFGKFNIKKAEFINDHEAIDPACSCYTCRNFSRGYLNHLFKAKELTFFRLASLHNLHYYLELARKMREAILNNSFTQFKRNFYHLRGK</sequence>
<name>TGT_CAMJJ</name>
<evidence type="ECO:0000255" key="1">
    <source>
        <dbReference type="HAMAP-Rule" id="MF_00168"/>
    </source>
</evidence>
<protein>
    <recommendedName>
        <fullName evidence="1">Queuine tRNA-ribosyltransferase</fullName>
        <ecNumber evidence="1">2.4.2.29</ecNumber>
    </recommendedName>
    <alternativeName>
        <fullName evidence="1">Guanine insertion enzyme</fullName>
    </alternativeName>
    <alternativeName>
        <fullName evidence="1">tRNA-guanine transglycosylase</fullName>
    </alternativeName>
</protein>
<accession>A1VZZ8</accession>
<comment type="function">
    <text evidence="1">Catalyzes the base-exchange of a guanine (G) residue with the queuine precursor 7-aminomethyl-7-deazaguanine (PreQ1) at position 34 (anticodon wobble position) in tRNAs with GU(N) anticodons (tRNA-Asp, -Asn, -His and -Tyr). Catalysis occurs through a double-displacement mechanism. The nucleophile active site attacks the C1' of nucleotide 34 to detach the guanine base from the RNA, forming a covalent enzyme-RNA intermediate. The proton acceptor active site deprotonates the incoming PreQ1, allowing a nucleophilic attack on the C1' of the ribose to form the product. After dissociation, two additional enzymatic reactions on the tRNA convert PreQ1 to queuine (Q), resulting in the hypermodified nucleoside queuosine (7-(((4,5-cis-dihydroxy-2-cyclopenten-1-yl)amino)methyl)-7-deazaguanosine).</text>
</comment>
<comment type="catalytic activity">
    <reaction evidence="1">
        <text>7-aminomethyl-7-carbaguanine + guanosine(34) in tRNA = 7-aminomethyl-7-carbaguanosine(34) in tRNA + guanine</text>
        <dbReference type="Rhea" id="RHEA:24104"/>
        <dbReference type="Rhea" id="RHEA-COMP:10341"/>
        <dbReference type="Rhea" id="RHEA-COMP:10342"/>
        <dbReference type="ChEBI" id="CHEBI:16235"/>
        <dbReference type="ChEBI" id="CHEBI:58703"/>
        <dbReference type="ChEBI" id="CHEBI:74269"/>
        <dbReference type="ChEBI" id="CHEBI:82833"/>
        <dbReference type="EC" id="2.4.2.29"/>
    </reaction>
</comment>
<comment type="cofactor">
    <cofactor evidence="1">
        <name>Zn(2+)</name>
        <dbReference type="ChEBI" id="CHEBI:29105"/>
    </cofactor>
    <text evidence="1">Binds 1 zinc ion per subunit.</text>
</comment>
<comment type="pathway">
    <text evidence="1">tRNA modification; tRNA-queuosine biosynthesis.</text>
</comment>
<comment type="subunit">
    <text evidence="1">Homodimer. Within each dimer, one monomer is responsible for RNA recognition and catalysis, while the other monomer binds to the replacement base PreQ1.</text>
</comment>
<comment type="similarity">
    <text evidence="1">Belongs to the queuine tRNA-ribosyltransferase family.</text>
</comment>
<gene>
    <name evidence="1" type="primary">tgt</name>
    <name type="ordered locus">CJJ81176_1028</name>
</gene>
<proteinExistence type="inferred from homology"/>
<keyword id="KW-0328">Glycosyltransferase</keyword>
<keyword id="KW-0479">Metal-binding</keyword>
<keyword id="KW-0671">Queuosine biosynthesis</keyword>
<keyword id="KW-0808">Transferase</keyword>
<keyword id="KW-0819">tRNA processing</keyword>
<keyword id="KW-0862">Zinc</keyword>
<dbReference type="EC" id="2.4.2.29" evidence="1"/>
<dbReference type="EMBL" id="CP000538">
    <property type="protein sequence ID" value="EAQ72174.1"/>
    <property type="molecule type" value="Genomic_DNA"/>
</dbReference>
<dbReference type="RefSeq" id="WP_002869233.1">
    <property type="nucleotide sequence ID" value="NC_008787.1"/>
</dbReference>
<dbReference type="SMR" id="A1VZZ8"/>
<dbReference type="KEGG" id="cjj:CJJ81176_1028"/>
<dbReference type="eggNOG" id="COG0343">
    <property type="taxonomic scope" value="Bacteria"/>
</dbReference>
<dbReference type="HOGENOM" id="CLU_022060_0_1_7"/>
<dbReference type="UniPathway" id="UPA00392"/>
<dbReference type="Proteomes" id="UP000000646">
    <property type="component" value="Chromosome"/>
</dbReference>
<dbReference type="GO" id="GO:0005829">
    <property type="term" value="C:cytosol"/>
    <property type="evidence" value="ECO:0007669"/>
    <property type="project" value="TreeGrafter"/>
</dbReference>
<dbReference type="GO" id="GO:0046872">
    <property type="term" value="F:metal ion binding"/>
    <property type="evidence" value="ECO:0007669"/>
    <property type="project" value="UniProtKB-KW"/>
</dbReference>
<dbReference type="GO" id="GO:0008479">
    <property type="term" value="F:tRNA-guanosine(34) queuine transglycosylase activity"/>
    <property type="evidence" value="ECO:0007669"/>
    <property type="project" value="UniProtKB-UniRule"/>
</dbReference>
<dbReference type="GO" id="GO:0008616">
    <property type="term" value="P:queuosine biosynthetic process"/>
    <property type="evidence" value="ECO:0007669"/>
    <property type="project" value="UniProtKB-UniRule"/>
</dbReference>
<dbReference type="GO" id="GO:0101030">
    <property type="term" value="P:tRNA-guanine transglycosylation"/>
    <property type="evidence" value="ECO:0007669"/>
    <property type="project" value="InterPro"/>
</dbReference>
<dbReference type="Gene3D" id="3.20.20.105">
    <property type="entry name" value="Queuine tRNA-ribosyltransferase-like"/>
    <property type="match status" value="1"/>
</dbReference>
<dbReference type="HAMAP" id="MF_00168">
    <property type="entry name" value="Q_tRNA_Tgt"/>
    <property type="match status" value="1"/>
</dbReference>
<dbReference type="InterPro" id="IPR004803">
    <property type="entry name" value="TGT"/>
</dbReference>
<dbReference type="InterPro" id="IPR036511">
    <property type="entry name" value="TGT-like_sf"/>
</dbReference>
<dbReference type="InterPro" id="IPR002616">
    <property type="entry name" value="tRNA_ribo_trans-like"/>
</dbReference>
<dbReference type="NCBIfam" id="TIGR00430">
    <property type="entry name" value="Q_tRNA_tgt"/>
    <property type="match status" value="1"/>
</dbReference>
<dbReference type="NCBIfam" id="TIGR00449">
    <property type="entry name" value="tgt_general"/>
    <property type="match status" value="1"/>
</dbReference>
<dbReference type="PANTHER" id="PTHR43530">
    <property type="entry name" value="QUEUINE TRNA-RIBOSYLTRANSFERASE CATALYTIC SUBUNIT 1"/>
    <property type="match status" value="1"/>
</dbReference>
<dbReference type="PANTHER" id="PTHR43530:SF1">
    <property type="entry name" value="QUEUINE TRNA-RIBOSYLTRANSFERASE CATALYTIC SUBUNIT 1"/>
    <property type="match status" value="1"/>
</dbReference>
<dbReference type="Pfam" id="PF01702">
    <property type="entry name" value="TGT"/>
    <property type="match status" value="1"/>
</dbReference>
<dbReference type="SUPFAM" id="SSF51713">
    <property type="entry name" value="tRNA-guanine transglycosylase"/>
    <property type="match status" value="1"/>
</dbReference>
<feature type="chain" id="PRO_1000016772" description="Queuine tRNA-ribosyltransferase">
    <location>
        <begin position="1"/>
        <end position="373"/>
    </location>
</feature>
<feature type="region of interest" description="RNA binding" evidence="1">
    <location>
        <begin position="251"/>
        <end position="257"/>
    </location>
</feature>
<feature type="region of interest" description="RNA binding; important for wobble base 34 recognition" evidence="1">
    <location>
        <begin position="275"/>
        <end position="279"/>
    </location>
</feature>
<feature type="active site" description="Proton acceptor" evidence="1">
    <location>
        <position position="90"/>
    </location>
</feature>
<feature type="active site" description="Nucleophile" evidence="1">
    <location>
        <position position="270"/>
    </location>
</feature>
<feature type="binding site" evidence="1">
    <location>
        <begin position="90"/>
        <end position="94"/>
    </location>
    <ligand>
        <name>substrate</name>
    </ligand>
</feature>
<feature type="binding site" evidence="1">
    <location>
        <position position="144"/>
    </location>
    <ligand>
        <name>substrate</name>
    </ligand>
</feature>
<feature type="binding site" evidence="1">
    <location>
        <position position="193"/>
    </location>
    <ligand>
        <name>substrate</name>
    </ligand>
</feature>
<feature type="binding site" evidence="1">
    <location>
        <position position="220"/>
    </location>
    <ligand>
        <name>substrate</name>
    </ligand>
</feature>
<feature type="binding site" evidence="1">
    <location>
        <position position="308"/>
    </location>
    <ligand>
        <name>Zn(2+)</name>
        <dbReference type="ChEBI" id="CHEBI:29105"/>
    </ligand>
</feature>
<feature type="binding site" evidence="1">
    <location>
        <position position="310"/>
    </location>
    <ligand>
        <name>Zn(2+)</name>
        <dbReference type="ChEBI" id="CHEBI:29105"/>
    </ligand>
</feature>
<feature type="binding site" evidence="1">
    <location>
        <position position="313"/>
    </location>
    <ligand>
        <name>Zn(2+)</name>
        <dbReference type="ChEBI" id="CHEBI:29105"/>
    </ligand>
</feature>
<feature type="binding site" evidence="1">
    <location>
        <position position="339"/>
    </location>
    <ligand>
        <name>Zn(2+)</name>
        <dbReference type="ChEBI" id="CHEBI:29105"/>
    </ligand>
</feature>
<organism>
    <name type="scientific">Campylobacter jejuni subsp. jejuni serotype O:23/36 (strain 81-176)</name>
    <dbReference type="NCBI Taxonomy" id="354242"/>
    <lineage>
        <taxon>Bacteria</taxon>
        <taxon>Pseudomonadati</taxon>
        <taxon>Campylobacterota</taxon>
        <taxon>Epsilonproteobacteria</taxon>
        <taxon>Campylobacterales</taxon>
        <taxon>Campylobacteraceae</taxon>
        <taxon>Campylobacter</taxon>
    </lineage>
</organism>